<organism>
    <name type="scientific">Xenopus tropicalis</name>
    <name type="common">Western clawed frog</name>
    <name type="synonym">Silurana tropicalis</name>
    <dbReference type="NCBI Taxonomy" id="8364"/>
    <lineage>
        <taxon>Eukaryota</taxon>
        <taxon>Metazoa</taxon>
        <taxon>Chordata</taxon>
        <taxon>Craniata</taxon>
        <taxon>Vertebrata</taxon>
        <taxon>Euteleostomi</taxon>
        <taxon>Amphibia</taxon>
        <taxon>Batrachia</taxon>
        <taxon>Anura</taxon>
        <taxon>Pipoidea</taxon>
        <taxon>Pipidae</taxon>
        <taxon>Xenopodinae</taxon>
        <taxon>Xenopus</taxon>
        <taxon>Silurana</taxon>
    </lineage>
</organism>
<comment type="function">
    <text evidence="1">Histone methyltransferase involved in left-right axis specification in early development and mitosis. Specifically trimethylates 'Lys-9' of histone H3 (H3K9me3). H3K9me3 represents a specific tag for epigenetic transcriptional repression by recruiting HP1 (CBX1, CBX3 and/or CBX5) proteins to methylated histones. Contributes to H3K9me3 in both the interspersed repetitive elements and centromere-associated repeats. Plays a role in chromosome condensation and segregation during mitosis (By similarity).</text>
</comment>
<comment type="catalytic activity">
    <reaction evidence="2">
        <text>N(6),N(6)-dimethyl-L-lysyl(9)-[histone H3] + S-adenosyl-L-methionine = N(6),N(6),N(6)-trimethyl-L-lysyl(9)-[histone H3] + S-adenosyl-L-homocysteine + H(+)</text>
        <dbReference type="Rhea" id="RHEA:60288"/>
        <dbReference type="Rhea" id="RHEA-COMP:15538"/>
        <dbReference type="Rhea" id="RHEA-COMP:15541"/>
        <dbReference type="ChEBI" id="CHEBI:15378"/>
        <dbReference type="ChEBI" id="CHEBI:57856"/>
        <dbReference type="ChEBI" id="CHEBI:59789"/>
        <dbReference type="ChEBI" id="CHEBI:61961"/>
        <dbReference type="ChEBI" id="CHEBI:61976"/>
        <dbReference type="EC" id="2.1.1.366"/>
    </reaction>
</comment>
<comment type="subcellular location">
    <subcellularLocation>
        <location evidence="1">Nucleus</location>
    </subcellularLocation>
    <subcellularLocation>
        <location evidence="1">Chromosome</location>
    </subcellularLocation>
</comment>
<comment type="domain">
    <text evidence="1">In the pre-SET domain, Cys residues bind 3 zinc ions that are arranged in a triangular cluster; some of these Cys residues contribute to the binding of two zinc ions within the cluster.</text>
</comment>
<comment type="similarity">
    <text evidence="4">Belongs to the class V-like SAM-binding methyltransferase superfamily.</text>
</comment>
<accession>A4IGY9</accession>
<reference key="1">
    <citation type="submission" date="2007-03" db="EMBL/GenBank/DDBJ databases">
        <authorList>
            <consortium name="NIH - Xenopus Gene Collection (XGC) project"/>
        </authorList>
    </citation>
    <scope>NUCLEOTIDE SEQUENCE [LARGE SCALE MRNA]</scope>
    <source>
        <tissue>Embryo</tissue>
    </source>
</reference>
<sequence>MERSTNARHSTLSSWTRESNTLSVLSKDVSLEDAKEYWKDCQADGKVDWIFEKLLNKLKILWQKIKDGSATNLEYVRAVILVNEAEQLEEDTETLHTDIQKENKVQENTDCAPERKEDSCADLNSDCETDVSGSECEHEDHSTVSPPATGAVCFGKHLCGPSCLSDINPSLLKKENPLNLPVSCDFQRWRVKTNGSEYPPHILYKAPCGRSLRDSDEVHSYLTETGCHFLGVDNFSFSTQVQLESHLSIKQEIVQDCDISNDVESVPVSLSNEIDDTRPTNFIYRKTSWPPGYSINNFTDIFVKCCSCTDGCLDISTCSCLQLTAQAFEKFTDSSLGIGPLGYKHKRLQEPVPTGLYECNLSCKCDRTLCQNRVVQHGLQLRLQVFKTDTKGWGVRCLDDVDNGTFVCIYAGRILIRTADSSVKTTLEDSVACGNEAKEDNGSTSTLMLSKRKRKPSHSDSEVTVMHLTPYSMRSLGLSVHRQSNTLSLTHLRSGGREISLEPFRRPKTKTSMLQKRRRQLIEEGACTVHNSSEEEGPTPPQSPKQKFNAGRKIHRNENSDETASGYVSEESSSSVISGGHPSEKPTCRTKSKLNKMTPHLSTSPEQTCEEDLHFLDASKEGNVGRFLNHSCCPNLFVQHVFVDTHQKSFPWVAFFTNSVVKAGTELTWDYNYVIGTAPDQEIQCLCGQQTCKHKIV</sequence>
<name>SETB2_XENTR</name>
<evidence type="ECO:0000250" key="1"/>
<evidence type="ECO:0000250" key="2">
    <source>
        <dbReference type="UniProtKB" id="Q96T68"/>
    </source>
</evidence>
<evidence type="ECO:0000255" key="3">
    <source>
        <dbReference type="PROSITE-ProRule" id="PRU00157"/>
    </source>
</evidence>
<evidence type="ECO:0000255" key="4">
    <source>
        <dbReference type="PROSITE-ProRule" id="PRU00190"/>
    </source>
</evidence>
<evidence type="ECO:0000255" key="5">
    <source>
        <dbReference type="PROSITE-ProRule" id="PRU00338"/>
    </source>
</evidence>
<evidence type="ECO:0000256" key="6">
    <source>
        <dbReference type="SAM" id="MobiDB-lite"/>
    </source>
</evidence>
<gene>
    <name type="primary">setdb2</name>
</gene>
<dbReference type="EC" id="2.1.1.366" evidence="2"/>
<dbReference type="EMBL" id="BC135302">
    <property type="protein sequence ID" value="AAI35303.1"/>
    <property type="molecule type" value="mRNA"/>
</dbReference>
<dbReference type="RefSeq" id="NP_001096194.1">
    <property type="nucleotide sequence ID" value="NM_001102724.2"/>
</dbReference>
<dbReference type="FunCoup" id="A4IGY9">
    <property type="interactions" value="2152"/>
</dbReference>
<dbReference type="STRING" id="8364.ENSXETP00000037585"/>
<dbReference type="PaxDb" id="8364-ENSXETP00000034176"/>
<dbReference type="GeneID" id="100124743"/>
<dbReference type="KEGG" id="xtr:100124743"/>
<dbReference type="AGR" id="Xenbase:XB-GENE-1219030"/>
<dbReference type="CTD" id="83852"/>
<dbReference type="Xenbase" id="XB-GENE-1219030">
    <property type="gene designation" value="setdb2"/>
</dbReference>
<dbReference type="eggNOG" id="KOG1141">
    <property type="taxonomic scope" value="Eukaryota"/>
</dbReference>
<dbReference type="InParanoid" id="A4IGY9"/>
<dbReference type="OMA" id="IKGMYIS"/>
<dbReference type="OrthoDB" id="5792673at2759"/>
<dbReference type="Proteomes" id="UP000008143">
    <property type="component" value="Chromosome 2"/>
</dbReference>
<dbReference type="GO" id="GO:0005694">
    <property type="term" value="C:chromosome"/>
    <property type="evidence" value="ECO:0007669"/>
    <property type="project" value="UniProtKB-SubCell"/>
</dbReference>
<dbReference type="GO" id="GO:0005634">
    <property type="term" value="C:nucleus"/>
    <property type="evidence" value="ECO:0000250"/>
    <property type="project" value="UniProtKB"/>
</dbReference>
<dbReference type="GO" id="GO:0003677">
    <property type="term" value="F:DNA binding"/>
    <property type="evidence" value="ECO:0007669"/>
    <property type="project" value="InterPro"/>
</dbReference>
<dbReference type="GO" id="GO:0046974">
    <property type="term" value="F:histone H3K9 methyltransferase activity"/>
    <property type="evidence" value="ECO:0000250"/>
    <property type="project" value="UniProtKB"/>
</dbReference>
<dbReference type="GO" id="GO:0140948">
    <property type="term" value="F:histone H3K9 monomethyltransferase activity"/>
    <property type="evidence" value="ECO:0007669"/>
    <property type="project" value="RHEA"/>
</dbReference>
<dbReference type="GO" id="GO:0008270">
    <property type="term" value="F:zinc ion binding"/>
    <property type="evidence" value="ECO:0007669"/>
    <property type="project" value="InterPro"/>
</dbReference>
<dbReference type="GO" id="GO:0051301">
    <property type="term" value="P:cell division"/>
    <property type="evidence" value="ECO:0007669"/>
    <property type="project" value="UniProtKB-KW"/>
</dbReference>
<dbReference type="GO" id="GO:0007059">
    <property type="term" value="P:chromosome segregation"/>
    <property type="evidence" value="ECO:0000250"/>
    <property type="project" value="UniProtKB"/>
</dbReference>
<dbReference type="GO" id="GO:0001947">
    <property type="term" value="P:heart looping"/>
    <property type="evidence" value="ECO:0000250"/>
    <property type="project" value="UniProtKB"/>
</dbReference>
<dbReference type="GO" id="GO:0070986">
    <property type="term" value="P:left/right axis specification"/>
    <property type="evidence" value="ECO:0000250"/>
    <property type="project" value="UniProtKB"/>
</dbReference>
<dbReference type="GO" id="GO:0032259">
    <property type="term" value="P:methylation"/>
    <property type="evidence" value="ECO:0007669"/>
    <property type="project" value="UniProtKB-KW"/>
</dbReference>
<dbReference type="GO" id="GO:0000278">
    <property type="term" value="P:mitotic cell cycle"/>
    <property type="evidence" value="ECO:0000250"/>
    <property type="project" value="UniProtKB"/>
</dbReference>
<dbReference type="GO" id="GO:0045892">
    <property type="term" value="P:negative regulation of DNA-templated transcription"/>
    <property type="evidence" value="ECO:0000250"/>
    <property type="project" value="UniProtKB"/>
</dbReference>
<dbReference type="CDD" id="cd01395">
    <property type="entry name" value="HMT_MBD"/>
    <property type="match status" value="1"/>
</dbReference>
<dbReference type="FunFam" id="2.170.270.10:FF:000017">
    <property type="entry name" value="Histone-lysine N-methyltransferase"/>
    <property type="match status" value="1"/>
</dbReference>
<dbReference type="FunFam" id="2.170.270.10:FF:000029">
    <property type="entry name" value="Histone-lysine N-methyltransferase SETDB2"/>
    <property type="match status" value="1"/>
</dbReference>
<dbReference type="Gene3D" id="2.170.270.10">
    <property type="entry name" value="SET domain"/>
    <property type="match status" value="2"/>
</dbReference>
<dbReference type="InterPro" id="IPR016177">
    <property type="entry name" value="DNA-bd_dom_sf"/>
</dbReference>
<dbReference type="InterPro" id="IPR001739">
    <property type="entry name" value="Methyl_CpG_DNA-bd"/>
</dbReference>
<dbReference type="InterPro" id="IPR007728">
    <property type="entry name" value="Pre-SET_dom"/>
</dbReference>
<dbReference type="InterPro" id="IPR001214">
    <property type="entry name" value="SET_dom"/>
</dbReference>
<dbReference type="InterPro" id="IPR046341">
    <property type="entry name" value="SET_dom_sf"/>
</dbReference>
<dbReference type="InterPro" id="IPR047232">
    <property type="entry name" value="SETDB1/2-like_MBD"/>
</dbReference>
<dbReference type="InterPro" id="IPR051516">
    <property type="entry name" value="SETDB_methyltransferase"/>
</dbReference>
<dbReference type="PANTHER" id="PTHR46024">
    <property type="entry name" value="HISTONE-LYSINE N-METHYLTRANSFERASE EGGLESS"/>
    <property type="match status" value="1"/>
</dbReference>
<dbReference type="PANTHER" id="PTHR46024:SF3">
    <property type="entry name" value="HISTONE-LYSINE N-METHYLTRANSFERASE SETDB2"/>
    <property type="match status" value="1"/>
</dbReference>
<dbReference type="Pfam" id="PF01429">
    <property type="entry name" value="MBD"/>
    <property type="match status" value="1"/>
</dbReference>
<dbReference type="Pfam" id="PF05033">
    <property type="entry name" value="Pre-SET"/>
    <property type="match status" value="1"/>
</dbReference>
<dbReference type="Pfam" id="PF00856">
    <property type="entry name" value="SET"/>
    <property type="match status" value="1"/>
</dbReference>
<dbReference type="SMART" id="SM00391">
    <property type="entry name" value="MBD"/>
    <property type="match status" value="1"/>
</dbReference>
<dbReference type="SMART" id="SM00468">
    <property type="entry name" value="PreSET"/>
    <property type="match status" value="1"/>
</dbReference>
<dbReference type="SMART" id="SM00317">
    <property type="entry name" value="SET"/>
    <property type="match status" value="1"/>
</dbReference>
<dbReference type="SUPFAM" id="SSF54171">
    <property type="entry name" value="DNA-binding domain"/>
    <property type="match status" value="1"/>
</dbReference>
<dbReference type="SUPFAM" id="SSF82199">
    <property type="entry name" value="SET domain"/>
    <property type="match status" value="1"/>
</dbReference>
<dbReference type="PROSITE" id="PS50982">
    <property type="entry name" value="MBD"/>
    <property type="match status" value="1"/>
</dbReference>
<dbReference type="PROSITE" id="PS50867">
    <property type="entry name" value="PRE_SET"/>
    <property type="match status" value="1"/>
</dbReference>
<dbReference type="PROSITE" id="PS50280">
    <property type="entry name" value="SET"/>
    <property type="match status" value="1"/>
</dbReference>
<feature type="chain" id="PRO_0000398647" description="Histone-lysine N-methyltransferase SETDB2">
    <location>
        <begin position="1"/>
        <end position="697"/>
    </location>
</feature>
<feature type="domain" description="MBD" evidence="5">
    <location>
        <begin position="172"/>
        <end position="242"/>
    </location>
</feature>
<feature type="domain" description="Pre-SET" evidence="3">
    <location>
        <begin position="304"/>
        <end position="378"/>
    </location>
</feature>
<feature type="domain" description="SET" evidence="4">
    <location>
        <begin position="381"/>
        <end position="672"/>
    </location>
</feature>
<feature type="region of interest" description="Disordered" evidence="6">
    <location>
        <begin position="438"/>
        <end position="461"/>
    </location>
</feature>
<feature type="region of interest" description="Disordered" evidence="6">
    <location>
        <begin position="529"/>
        <end position="605"/>
    </location>
</feature>
<feature type="compositionally biased region" description="Low complexity" evidence="6">
    <location>
        <begin position="565"/>
        <end position="581"/>
    </location>
</feature>
<feature type="binding site" evidence="1">
    <location>
        <position position="306"/>
    </location>
    <ligand>
        <name>Zn(2+)</name>
        <dbReference type="ChEBI" id="CHEBI:29105"/>
        <label>1</label>
    </ligand>
</feature>
<feature type="binding site" evidence="1">
    <location>
        <position position="306"/>
    </location>
    <ligand>
        <name>Zn(2+)</name>
        <dbReference type="ChEBI" id="CHEBI:29105"/>
        <label>2</label>
    </ligand>
</feature>
<feature type="binding site" evidence="1">
    <location>
        <position position="308"/>
    </location>
    <ligand>
        <name>Zn(2+)</name>
        <dbReference type="ChEBI" id="CHEBI:29105"/>
        <label>1</label>
    </ligand>
</feature>
<feature type="binding site" evidence="1">
    <location>
        <position position="312"/>
    </location>
    <ligand>
        <name>Zn(2+)</name>
        <dbReference type="ChEBI" id="CHEBI:29105"/>
        <label>1</label>
    </ligand>
</feature>
<feature type="binding site" evidence="1">
    <location>
        <position position="312"/>
    </location>
    <ligand>
        <name>Zn(2+)</name>
        <dbReference type="ChEBI" id="CHEBI:29105"/>
        <label>3</label>
    </ligand>
</feature>
<feature type="binding site" evidence="1">
    <location>
        <position position="318"/>
    </location>
    <ligand>
        <name>Zn(2+)</name>
        <dbReference type="ChEBI" id="CHEBI:29105"/>
        <label>1</label>
    </ligand>
</feature>
<feature type="binding site" evidence="1">
    <location>
        <position position="320"/>
    </location>
    <ligand>
        <name>Zn(2+)</name>
        <dbReference type="ChEBI" id="CHEBI:29105"/>
        <label>2</label>
    </ligand>
</feature>
<feature type="binding site" evidence="1">
    <location>
        <position position="359"/>
    </location>
    <ligand>
        <name>Zn(2+)</name>
        <dbReference type="ChEBI" id="CHEBI:29105"/>
        <label>2</label>
    </ligand>
</feature>
<feature type="binding site" evidence="1">
    <location>
        <position position="359"/>
    </location>
    <ligand>
        <name>Zn(2+)</name>
        <dbReference type="ChEBI" id="CHEBI:29105"/>
        <label>3</label>
    </ligand>
</feature>
<feature type="binding site" evidence="1">
    <location>
        <position position="363"/>
    </location>
    <ligand>
        <name>Zn(2+)</name>
        <dbReference type="ChEBI" id="CHEBI:29105"/>
        <label>2</label>
    </ligand>
</feature>
<feature type="binding site" evidence="1">
    <location>
        <position position="365"/>
    </location>
    <ligand>
        <name>Zn(2+)</name>
        <dbReference type="ChEBI" id="CHEBI:29105"/>
        <label>3</label>
    </ligand>
</feature>
<feature type="binding site" evidence="1">
    <location>
        <position position="370"/>
    </location>
    <ligand>
        <name>Zn(2+)</name>
        <dbReference type="ChEBI" id="CHEBI:29105"/>
        <label>3</label>
    </ligand>
</feature>
<feature type="binding site" evidence="1">
    <location>
        <begin position="391"/>
        <end position="393"/>
    </location>
    <ligand>
        <name>S-adenosyl-L-methionine</name>
        <dbReference type="ChEBI" id="CHEBI:59789"/>
    </ligand>
</feature>
<feature type="binding site" evidence="4">
    <location>
        <position position="626"/>
    </location>
    <ligand>
        <name>S-adenosyl-L-methionine</name>
        <dbReference type="ChEBI" id="CHEBI:59789"/>
    </ligand>
</feature>
<feature type="binding site" evidence="1">
    <location>
        <begin position="629"/>
        <end position="630"/>
    </location>
    <ligand>
        <name>S-adenosyl-L-methionine</name>
        <dbReference type="ChEBI" id="CHEBI:59789"/>
    </ligand>
</feature>
<feature type="binding site" evidence="1">
    <location>
        <position position="632"/>
    </location>
    <ligand>
        <name>Zn(2+)</name>
        <dbReference type="ChEBI" id="CHEBI:29105"/>
        <label>4</label>
    </ligand>
</feature>
<feature type="binding site" evidence="1">
    <location>
        <position position="685"/>
    </location>
    <ligand>
        <name>Zn(2+)</name>
        <dbReference type="ChEBI" id="CHEBI:29105"/>
        <label>4</label>
    </ligand>
</feature>
<feature type="binding site" evidence="1">
    <location>
        <position position="687"/>
    </location>
    <ligand>
        <name>Zn(2+)</name>
        <dbReference type="ChEBI" id="CHEBI:29105"/>
        <label>4</label>
    </ligand>
</feature>
<feature type="binding site" evidence="1">
    <location>
        <position position="692"/>
    </location>
    <ligand>
        <name>Zn(2+)</name>
        <dbReference type="ChEBI" id="CHEBI:29105"/>
        <label>4</label>
    </ligand>
</feature>
<protein>
    <recommendedName>
        <fullName>Histone-lysine N-methyltransferase SETDB2</fullName>
        <ecNumber evidence="2">2.1.1.366</ecNumber>
    </recommendedName>
    <alternativeName>
        <fullName>SET domain bifurcated 2</fullName>
    </alternativeName>
</protein>
<keyword id="KW-0131">Cell cycle</keyword>
<keyword id="KW-0132">Cell division</keyword>
<keyword id="KW-0156">Chromatin regulator</keyword>
<keyword id="KW-0158">Chromosome</keyword>
<keyword id="KW-0217">Developmental protein</keyword>
<keyword id="KW-0479">Metal-binding</keyword>
<keyword id="KW-0489">Methyltransferase</keyword>
<keyword id="KW-0498">Mitosis</keyword>
<keyword id="KW-0539">Nucleus</keyword>
<keyword id="KW-1185">Reference proteome</keyword>
<keyword id="KW-0949">S-adenosyl-L-methionine</keyword>
<keyword id="KW-0808">Transferase</keyword>
<keyword id="KW-0862">Zinc</keyword>
<proteinExistence type="evidence at transcript level"/>